<protein>
    <recommendedName>
        <fullName evidence="1">Proline--tRNA ligase</fullName>
        <ecNumber evidence="1">6.1.1.15</ecNumber>
    </recommendedName>
    <alternativeName>
        <fullName evidence="1">Prolyl-tRNA synthetase</fullName>
        <shortName evidence="1">ProRS</shortName>
    </alternativeName>
</protein>
<proteinExistence type="inferred from homology"/>
<organism>
    <name type="scientific">Lactiplantibacillus plantarum (strain ATCC BAA-793 / NCIMB 8826 / WCFS1)</name>
    <name type="common">Lactobacillus plantarum</name>
    <dbReference type="NCBI Taxonomy" id="220668"/>
    <lineage>
        <taxon>Bacteria</taxon>
        <taxon>Bacillati</taxon>
        <taxon>Bacillota</taxon>
        <taxon>Bacilli</taxon>
        <taxon>Lactobacillales</taxon>
        <taxon>Lactobacillaceae</taxon>
        <taxon>Lactiplantibacillus</taxon>
    </lineage>
</organism>
<name>SYP_LACPL</name>
<sequence length="569" mass="63516">MKQSKLLIPTLKEVPNDAEALSHQMMLRAGYIRQISAGMYAYLPLAYRVLTNIEKIIRQEMEKIDAAEMLVPAVIPAELWKATGRYETYGPELFKLKNRHDREFILGPTHEETFTSIVRDEIKSYKRLPLTLYQIQAKYRDEDRPRYGLLRGREFIMKDAYSFHADEASLDDTFQDMAQAYQNIFERVGLKFRSIIGDGGAMGGKDSREYSAIAPVGEDTIVYSDASDYAANLEMARSLYVPKKSHASLKDMEKIDTPGVGTIDELAEFLKVGADQLVKSILFIADDQPVMALVRGDHEVNDVKLKNYLGADFLEMATPEQAQQYLGASFGSLGPVNVHDDVKIVADQYVKDMVNITVGANEDGHHFTNVNPERDFHAEAYVDIRFVQEGELSPDGAGVLKFTKGIEIGHIFKLGTRYSKDLHAEVLDANGRNIPVIMGCYGIGVSRLLSAIAEQRADENGLIWPKAIAPFDVHVIPVNPKKADQVEVADQVEAQLEAAGYNVLYDDRKERPGVKFADSDLMGIPARITIGKKASEGIVEIKLRQTGETLEVKQEEIANNLAVLLKNID</sequence>
<keyword id="KW-0030">Aminoacyl-tRNA synthetase</keyword>
<keyword id="KW-0067">ATP-binding</keyword>
<keyword id="KW-0963">Cytoplasm</keyword>
<keyword id="KW-0436">Ligase</keyword>
<keyword id="KW-0547">Nucleotide-binding</keyword>
<keyword id="KW-0648">Protein biosynthesis</keyword>
<keyword id="KW-1185">Reference proteome</keyword>
<gene>
    <name evidence="1" type="primary">proS</name>
    <name type="ordered locus">lp_2048</name>
</gene>
<evidence type="ECO:0000255" key="1">
    <source>
        <dbReference type="HAMAP-Rule" id="MF_01569"/>
    </source>
</evidence>
<accession>Q88VK1</accession>
<accession>F9UQ03</accession>
<feature type="chain" id="PRO_0000248707" description="Proline--tRNA ligase">
    <location>
        <begin position="1"/>
        <end position="569"/>
    </location>
</feature>
<reference key="1">
    <citation type="journal article" date="2003" name="Proc. Natl. Acad. Sci. U.S.A.">
        <title>Complete genome sequence of Lactobacillus plantarum WCFS1.</title>
        <authorList>
            <person name="Kleerebezem M."/>
            <person name="Boekhorst J."/>
            <person name="van Kranenburg R."/>
            <person name="Molenaar D."/>
            <person name="Kuipers O.P."/>
            <person name="Leer R."/>
            <person name="Tarchini R."/>
            <person name="Peters S.A."/>
            <person name="Sandbrink H.M."/>
            <person name="Fiers M.W.E.J."/>
            <person name="Stiekema W."/>
            <person name="Klein Lankhorst R.M."/>
            <person name="Bron P.A."/>
            <person name="Hoffer S.M."/>
            <person name="Nierop Groot M.N."/>
            <person name="Kerkhoven R."/>
            <person name="De Vries M."/>
            <person name="Ursing B."/>
            <person name="De Vos W.M."/>
            <person name="Siezen R.J."/>
        </authorList>
    </citation>
    <scope>NUCLEOTIDE SEQUENCE [LARGE SCALE GENOMIC DNA]</scope>
    <source>
        <strain>ATCC BAA-793 / NCIMB 8826 / WCFS1</strain>
    </source>
</reference>
<reference key="2">
    <citation type="journal article" date="2012" name="J. Bacteriol.">
        <title>Complete resequencing and reannotation of the Lactobacillus plantarum WCFS1 genome.</title>
        <authorList>
            <person name="Siezen R.J."/>
            <person name="Francke C."/>
            <person name="Renckens B."/>
            <person name="Boekhorst J."/>
            <person name="Wels M."/>
            <person name="Kleerebezem M."/>
            <person name="van Hijum S.A."/>
        </authorList>
    </citation>
    <scope>NUCLEOTIDE SEQUENCE [LARGE SCALE GENOMIC DNA]</scope>
    <scope>GENOME REANNOTATION</scope>
    <source>
        <strain>ATCC BAA-793 / NCIMB 8826 / WCFS1</strain>
    </source>
</reference>
<comment type="function">
    <text evidence="1">Catalyzes the attachment of proline to tRNA(Pro) in a two-step reaction: proline is first activated by ATP to form Pro-AMP and then transferred to the acceptor end of tRNA(Pro). As ProRS can inadvertently accommodate and process non-cognate amino acids such as alanine and cysteine, to avoid such errors it has two additional distinct editing activities against alanine. One activity is designated as 'pretransfer' editing and involves the tRNA(Pro)-independent hydrolysis of activated Ala-AMP. The other activity is designated 'posttransfer' editing and involves deacylation of mischarged Ala-tRNA(Pro). The misacylated Cys-tRNA(Pro) is not edited by ProRS.</text>
</comment>
<comment type="catalytic activity">
    <reaction evidence="1">
        <text>tRNA(Pro) + L-proline + ATP = L-prolyl-tRNA(Pro) + AMP + diphosphate</text>
        <dbReference type="Rhea" id="RHEA:14305"/>
        <dbReference type="Rhea" id="RHEA-COMP:9700"/>
        <dbReference type="Rhea" id="RHEA-COMP:9702"/>
        <dbReference type="ChEBI" id="CHEBI:30616"/>
        <dbReference type="ChEBI" id="CHEBI:33019"/>
        <dbReference type="ChEBI" id="CHEBI:60039"/>
        <dbReference type="ChEBI" id="CHEBI:78442"/>
        <dbReference type="ChEBI" id="CHEBI:78532"/>
        <dbReference type="ChEBI" id="CHEBI:456215"/>
        <dbReference type="EC" id="6.1.1.15"/>
    </reaction>
</comment>
<comment type="subunit">
    <text evidence="1">Homodimer.</text>
</comment>
<comment type="subcellular location">
    <subcellularLocation>
        <location evidence="1">Cytoplasm</location>
    </subcellularLocation>
</comment>
<comment type="domain">
    <text evidence="1">Consists of three domains: the N-terminal catalytic domain, the editing domain and the C-terminal anticodon-binding domain.</text>
</comment>
<comment type="similarity">
    <text evidence="1">Belongs to the class-II aminoacyl-tRNA synthetase family. ProS type 1 subfamily.</text>
</comment>
<dbReference type="EC" id="6.1.1.15" evidence="1"/>
<dbReference type="EMBL" id="AL935263">
    <property type="protein sequence ID" value="CCC79292.1"/>
    <property type="molecule type" value="Genomic_DNA"/>
</dbReference>
<dbReference type="RefSeq" id="WP_003640732.1">
    <property type="nucleotide sequence ID" value="NC_004567.2"/>
</dbReference>
<dbReference type="RefSeq" id="YP_004889806.1">
    <property type="nucleotide sequence ID" value="NC_004567.2"/>
</dbReference>
<dbReference type="SMR" id="Q88VK1"/>
<dbReference type="STRING" id="220668.lp_2048"/>
<dbReference type="EnsemblBacteria" id="CCC79292">
    <property type="protein sequence ID" value="CCC79292"/>
    <property type="gene ID" value="lp_2048"/>
</dbReference>
<dbReference type="KEGG" id="lpl:lp_2048"/>
<dbReference type="PATRIC" id="fig|220668.9.peg.1733"/>
<dbReference type="eggNOG" id="COG0442">
    <property type="taxonomic scope" value="Bacteria"/>
</dbReference>
<dbReference type="HOGENOM" id="CLU_016739_0_0_9"/>
<dbReference type="OrthoDB" id="9809052at2"/>
<dbReference type="PhylomeDB" id="Q88VK1"/>
<dbReference type="Proteomes" id="UP000000432">
    <property type="component" value="Chromosome"/>
</dbReference>
<dbReference type="GO" id="GO:0005829">
    <property type="term" value="C:cytosol"/>
    <property type="evidence" value="ECO:0007669"/>
    <property type="project" value="TreeGrafter"/>
</dbReference>
<dbReference type="GO" id="GO:0002161">
    <property type="term" value="F:aminoacyl-tRNA deacylase activity"/>
    <property type="evidence" value="ECO:0007669"/>
    <property type="project" value="InterPro"/>
</dbReference>
<dbReference type="GO" id="GO:0005524">
    <property type="term" value="F:ATP binding"/>
    <property type="evidence" value="ECO:0007669"/>
    <property type="project" value="UniProtKB-UniRule"/>
</dbReference>
<dbReference type="GO" id="GO:0140096">
    <property type="term" value="F:catalytic activity, acting on a protein"/>
    <property type="evidence" value="ECO:0007669"/>
    <property type="project" value="UniProtKB-ARBA"/>
</dbReference>
<dbReference type="GO" id="GO:0004827">
    <property type="term" value="F:proline-tRNA ligase activity"/>
    <property type="evidence" value="ECO:0007669"/>
    <property type="project" value="UniProtKB-UniRule"/>
</dbReference>
<dbReference type="GO" id="GO:0016740">
    <property type="term" value="F:transferase activity"/>
    <property type="evidence" value="ECO:0007669"/>
    <property type="project" value="UniProtKB-ARBA"/>
</dbReference>
<dbReference type="GO" id="GO:0006433">
    <property type="term" value="P:prolyl-tRNA aminoacylation"/>
    <property type="evidence" value="ECO:0007669"/>
    <property type="project" value="UniProtKB-UniRule"/>
</dbReference>
<dbReference type="CDD" id="cd04334">
    <property type="entry name" value="ProRS-INS"/>
    <property type="match status" value="1"/>
</dbReference>
<dbReference type="CDD" id="cd00861">
    <property type="entry name" value="ProRS_anticodon_short"/>
    <property type="match status" value="1"/>
</dbReference>
<dbReference type="CDD" id="cd00779">
    <property type="entry name" value="ProRS_core_prok"/>
    <property type="match status" value="1"/>
</dbReference>
<dbReference type="FunFam" id="3.30.930.10:FF:000062">
    <property type="entry name" value="Proline--tRNA ligase"/>
    <property type="match status" value="1"/>
</dbReference>
<dbReference type="FunFam" id="3.30.930.10:FF:000066">
    <property type="entry name" value="Proline--tRNA ligase"/>
    <property type="match status" value="1"/>
</dbReference>
<dbReference type="FunFam" id="3.40.50.800:FF:000011">
    <property type="entry name" value="Proline--tRNA ligase"/>
    <property type="match status" value="1"/>
</dbReference>
<dbReference type="Gene3D" id="3.40.50.800">
    <property type="entry name" value="Anticodon-binding domain"/>
    <property type="match status" value="1"/>
</dbReference>
<dbReference type="Gene3D" id="3.30.930.10">
    <property type="entry name" value="Bira Bifunctional Protein, Domain 2"/>
    <property type="match status" value="2"/>
</dbReference>
<dbReference type="Gene3D" id="3.90.960.10">
    <property type="entry name" value="YbaK/aminoacyl-tRNA synthetase-associated domain"/>
    <property type="match status" value="1"/>
</dbReference>
<dbReference type="HAMAP" id="MF_01569">
    <property type="entry name" value="Pro_tRNA_synth_type1"/>
    <property type="match status" value="1"/>
</dbReference>
<dbReference type="InterPro" id="IPR002314">
    <property type="entry name" value="aa-tRNA-synt_IIb"/>
</dbReference>
<dbReference type="InterPro" id="IPR006195">
    <property type="entry name" value="aa-tRNA-synth_II"/>
</dbReference>
<dbReference type="InterPro" id="IPR045864">
    <property type="entry name" value="aa-tRNA-synth_II/BPL/LPL"/>
</dbReference>
<dbReference type="InterPro" id="IPR004154">
    <property type="entry name" value="Anticodon-bd"/>
</dbReference>
<dbReference type="InterPro" id="IPR036621">
    <property type="entry name" value="Anticodon-bd_dom_sf"/>
</dbReference>
<dbReference type="InterPro" id="IPR002316">
    <property type="entry name" value="Pro-tRNA-ligase_IIa"/>
</dbReference>
<dbReference type="InterPro" id="IPR004500">
    <property type="entry name" value="Pro-tRNA-synth_IIa_bac-type"/>
</dbReference>
<dbReference type="InterPro" id="IPR023717">
    <property type="entry name" value="Pro-tRNA-Synthase_IIa_type1"/>
</dbReference>
<dbReference type="InterPro" id="IPR050062">
    <property type="entry name" value="Pro-tRNA_synthetase"/>
</dbReference>
<dbReference type="InterPro" id="IPR044140">
    <property type="entry name" value="ProRS_anticodon_short"/>
</dbReference>
<dbReference type="InterPro" id="IPR033730">
    <property type="entry name" value="ProRS_core_prok"/>
</dbReference>
<dbReference type="InterPro" id="IPR036754">
    <property type="entry name" value="YbaK/aa-tRNA-synt-asso_dom_sf"/>
</dbReference>
<dbReference type="InterPro" id="IPR007214">
    <property type="entry name" value="YbaK/aa-tRNA-synth-assoc-dom"/>
</dbReference>
<dbReference type="NCBIfam" id="NF006625">
    <property type="entry name" value="PRK09194.1"/>
    <property type="match status" value="1"/>
</dbReference>
<dbReference type="NCBIfam" id="TIGR00409">
    <property type="entry name" value="proS_fam_II"/>
    <property type="match status" value="1"/>
</dbReference>
<dbReference type="PANTHER" id="PTHR42753">
    <property type="entry name" value="MITOCHONDRIAL RIBOSOME PROTEIN L39/PROLYL-TRNA LIGASE FAMILY MEMBER"/>
    <property type="match status" value="1"/>
</dbReference>
<dbReference type="PANTHER" id="PTHR42753:SF2">
    <property type="entry name" value="PROLINE--TRNA LIGASE"/>
    <property type="match status" value="1"/>
</dbReference>
<dbReference type="Pfam" id="PF03129">
    <property type="entry name" value="HGTP_anticodon"/>
    <property type="match status" value="1"/>
</dbReference>
<dbReference type="Pfam" id="PF00587">
    <property type="entry name" value="tRNA-synt_2b"/>
    <property type="match status" value="1"/>
</dbReference>
<dbReference type="Pfam" id="PF04073">
    <property type="entry name" value="tRNA_edit"/>
    <property type="match status" value="1"/>
</dbReference>
<dbReference type="PRINTS" id="PR01046">
    <property type="entry name" value="TRNASYNTHPRO"/>
</dbReference>
<dbReference type="SUPFAM" id="SSF52954">
    <property type="entry name" value="Class II aaRS ABD-related"/>
    <property type="match status" value="1"/>
</dbReference>
<dbReference type="SUPFAM" id="SSF55681">
    <property type="entry name" value="Class II aaRS and biotin synthetases"/>
    <property type="match status" value="1"/>
</dbReference>
<dbReference type="SUPFAM" id="SSF55826">
    <property type="entry name" value="YbaK/ProRS associated domain"/>
    <property type="match status" value="1"/>
</dbReference>
<dbReference type="PROSITE" id="PS50862">
    <property type="entry name" value="AA_TRNA_LIGASE_II"/>
    <property type="match status" value="1"/>
</dbReference>